<evidence type="ECO:0000250" key="1">
    <source>
        <dbReference type="UniProtKB" id="P85253"/>
    </source>
</evidence>
<evidence type="ECO:0000255" key="2"/>
<evidence type="ECO:0000269" key="3">
    <source>
    </source>
</evidence>
<evidence type="ECO:0000269" key="4">
    <source>
    </source>
</evidence>
<evidence type="ECO:0000303" key="5">
    <source>
    </source>
</evidence>
<evidence type="ECO:0000303" key="6">
    <source>
    </source>
</evidence>
<evidence type="ECO:0000305" key="7"/>
<reference evidence="7" key="1">
    <citation type="journal article" date="2008" name="Biochem. J.">
        <title>Cyto-insectotoxins, a novel class of cytolytic and insecticidal peptides from spider venom.</title>
        <authorList>
            <person name="Vassilevski A.A."/>
            <person name="Kozlov S.A."/>
            <person name="Samsonova O.V."/>
            <person name="Egorova N.S."/>
            <person name="Karpunin D.V."/>
            <person name="Pluzhnikov K.A."/>
            <person name="Feofanov A.V."/>
            <person name="Grishin E.V."/>
        </authorList>
    </citation>
    <scope>NUCLEOTIDE SEQUENCE [MRNA]</scope>
    <scope>PROTEIN SEQUENCE OF 61-129</scope>
    <scope>FUNCTION</scope>
    <scope>SUBCELLULAR LOCATION</scope>
    <scope>TISSUE SPECIFICITY</scope>
    <source>
        <tissue evidence="3">Venom</tissue>
        <tissue>Venom gland</tissue>
    </source>
</reference>
<reference key="2">
    <citation type="journal article" date="2016" name="Biochem. J.">
        <title>Lachesana tarabaevi, an expert in membrane-active toxins.</title>
        <authorList>
            <person name="Kuzmenkov A.I."/>
            <person name="Sachkova M.Y."/>
            <person name="Kovalchuk S.I."/>
            <person name="Grishin E.V."/>
            <person name="Vassilevski A.A."/>
        </authorList>
    </citation>
    <scope>SUBCELLULAR LOCATION</scope>
    <scope>PQM MOTIF</scope>
    <scope>MASS SPECTROMETRY</scope>
    <source>
        <tissue evidence="6">Venom</tissue>
    </source>
</reference>
<proteinExistence type="evidence at protein level"/>
<keyword id="KW-0044">Antibiotic</keyword>
<keyword id="KW-0929">Antimicrobial</keyword>
<keyword id="KW-0204">Cytolysis</keyword>
<keyword id="KW-0903">Direct protein sequencing</keyword>
<keyword id="KW-0354">Hemolysis</keyword>
<keyword id="KW-0964">Secreted</keyword>
<keyword id="KW-0732">Signal</keyword>
<keyword id="KW-0800">Toxin</keyword>
<name>CTX17_LACTA</name>
<gene>
    <name type="primary">cit 1-7</name>
</gene>
<sequence>MKYFVVALALVAAFACIAESKPAESEHELAEVEEENELADLEDAVWLEHLADLSDLEEARGFFGNTWKKIKGKADKIMLKKAVKIMVKKEGISKEEAQAKVDAMSKKQIRLYLLKHYGKKALQKASEKL</sequence>
<organism>
    <name type="scientific">Lachesana tarabaevi</name>
    <name type="common">Spider</name>
    <dbReference type="NCBI Taxonomy" id="379576"/>
    <lineage>
        <taxon>Eukaryota</taxon>
        <taxon>Metazoa</taxon>
        <taxon>Ecdysozoa</taxon>
        <taxon>Arthropoda</taxon>
        <taxon>Chelicerata</taxon>
        <taxon>Arachnida</taxon>
        <taxon>Araneae</taxon>
        <taxon>Araneomorphae</taxon>
        <taxon>Entelegynae</taxon>
        <taxon>Entelegynae incertae sedis</taxon>
        <taxon>Zodariidae</taxon>
        <taxon>Lachesana</taxon>
    </lineage>
</organism>
<comment type="function">
    <text evidence="3">Insecticidal, cytolytic and antimicrobial peptide. Has insecticidal activity against the flesh fly S.carnaria. Has antibacterial activity against the Gram-negative bacteria E.coli. Forms voltage-dependent, ion-permeable channels in membranes. At high concentration causes cell membrane lysis.</text>
</comment>
<comment type="subcellular location">
    <subcellularLocation>
        <location evidence="3 4">Secreted</location>
    </subcellularLocation>
</comment>
<comment type="tissue specificity">
    <text evidence="3">Expressed by the venom gland.</text>
</comment>
<comment type="domain">
    <text evidence="1">Both the N-terminus (61-94) and the C-terminus (99-129) of the mature peptide form alpha-helices which probably disrupt target cell membranes. The linker region (95-98) probably derives from a processing quadruplet motif (PQM), found in propeptides of many zodatoxins, hinting at a fusion of two originally separate membrane-active peptides.</text>
</comment>
<comment type="PTM">
    <text evidence="6">Cleavage of the propeptide depends on the processing quadruplet motif (XXXR, with at least one of X being E).</text>
</comment>
<comment type="mass spectrometry"/>
<comment type="similarity">
    <text evidence="7">Belongs to the cationic peptide 06 (cytoinsectotoxin) family.</text>
</comment>
<accession>P85258</accession>
<accession>B3W6I4</accession>
<dbReference type="EMBL" id="FM165479">
    <property type="protein sequence ID" value="CAQ63555.1"/>
    <property type="molecule type" value="mRNA"/>
</dbReference>
<dbReference type="SMR" id="P85258"/>
<dbReference type="ArachnoServer" id="AS000650">
    <property type="toxin name" value="M-zodatoxin-Lt8f"/>
</dbReference>
<dbReference type="GO" id="GO:0005576">
    <property type="term" value="C:extracellular region"/>
    <property type="evidence" value="ECO:0000314"/>
    <property type="project" value="UniProtKB"/>
</dbReference>
<dbReference type="GO" id="GO:0090729">
    <property type="term" value="F:toxin activity"/>
    <property type="evidence" value="ECO:0007669"/>
    <property type="project" value="UniProtKB-KW"/>
</dbReference>
<dbReference type="GO" id="GO:0051838">
    <property type="term" value="P:cytolysis by host of symbiont cells"/>
    <property type="evidence" value="ECO:0000314"/>
    <property type="project" value="UniProtKB"/>
</dbReference>
<dbReference type="GO" id="GO:0050829">
    <property type="term" value="P:defense response to Gram-negative bacterium"/>
    <property type="evidence" value="ECO:0000314"/>
    <property type="project" value="UniProtKB"/>
</dbReference>
<dbReference type="GO" id="GO:0050830">
    <property type="term" value="P:defense response to Gram-positive bacterium"/>
    <property type="evidence" value="ECO:0000250"/>
    <property type="project" value="UniProtKB"/>
</dbReference>
<dbReference type="InterPro" id="IPR018802">
    <property type="entry name" value="Latarcin_precursor"/>
</dbReference>
<dbReference type="Pfam" id="PF10279">
    <property type="entry name" value="Latarcin"/>
    <property type="match status" value="1"/>
</dbReference>
<feature type="signal peptide" evidence="2">
    <location>
        <begin position="1"/>
        <end position="20"/>
    </location>
</feature>
<feature type="propeptide" id="PRO_0000366079" evidence="3">
    <location>
        <begin position="21"/>
        <end position="60"/>
    </location>
</feature>
<feature type="chain" id="PRO_0000337163" description="M-zodatoxin-Lt8f">
    <location>
        <begin position="61"/>
        <end position="129"/>
    </location>
</feature>
<feature type="short sequence motif" description="Processing quadruplet motif" evidence="6">
    <location>
        <begin position="57"/>
        <end position="60"/>
    </location>
</feature>
<protein>
    <recommendedName>
        <fullName>M-zodatoxin-Lt8f</fullName>
        <shortName>M-ZDTX-Lt8f</shortName>
    </recommendedName>
    <alternativeName>
        <fullName evidence="5">Cytoinsectotoxin-1f</fullName>
        <shortName evidence="5">CIT-1f</shortName>
    </alternativeName>
</protein>